<protein>
    <recommendedName>
        <fullName evidence="1">4-hydroxy-3-methylbut-2-enyl diphosphate reductase</fullName>
        <shortName evidence="1">HMBPP reductase</shortName>
        <ecNumber evidence="1">1.17.7.4</ecNumber>
    </recommendedName>
</protein>
<reference key="1">
    <citation type="journal article" date="2011" name="MBio">
        <title>Novel metabolic attributes of the genus Cyanothece, comprising a group of unicellular nitrogen-fixing Cyanobacteria.</title>
        <authorList>
            <person name="Bandyopadhyay A."/>
            <person name="Elvitigala T."/>
            <person name="Welsh E."/>
            <person name="Stockel J."/>
            <person name="Liberton M."/>
            <person name="Min H."/>
            <person name="Sherman L.A."/>
            <person name="Pakrasi H.B."/>
        </authorList>
    </citation>
    <scope>NUCLEOTIDE SEQUENCE [LARGE SCALE GENOMIC DNA]</scope>
    <source>
        <strain>PCC 7424</strain>
    </source>
</reference>
<sequence length="402" mass="45676">MDTKAFKRSLQQSENYHRKGFGQEDEAMGVMNSEYQSSLIQEIRNNNYRLTQGDVTIRLAEAFGFCWGVERAVAMSYETRQHFPNQRIWLTNEVIHNPSVNQRLRDMKVEFIPVIEDQKDFSVVERDDVVILPAFGASVTEMQLLNDKGCTIVDTTCPWVAKVWNSVEKHKKRNYTSIIHGKYKHEETVATSSFAGTYLVVLNMEQAKYVCNYILNGGDKQEFLAKFKKAYSEGFDPDTDLERVGIANQTTMLKSETEEIGKLFEHTMLKKYGPLDLNNHFMSFNTICDATQERQDAMLDLVKEKLDLMVVIGGFNSSNTTHLQEISIHHGIVSYHIDSAARIDLNNHIEHKPLGKDLEVKENWLPDGKIVVGVTSGASTPDIVVEQVLQKIFAIKSAVAMV</sequence>
<accession>B7KEG3</accession>
<keyword id="KW-0004">4Fe-4S</keyword>
<keyword id="KW-0408">Iron</keyword>
<keyword id="KW-0411">Iron-sulfur</keyword>
<keyword id="KW-0414">Isoprene biosynthesis</keyword>
<keyword id="KW-0479">Metal-binding</keyword>
<keyword id="KW-0560">Oxidoreductase</keyword>
<keyword id="KW-1185">Reference proteome</keyword>
<proteinExistence type="inferred from homology"/>
<name>ISPH_GLOC7</name>
<evidence type="ECO:0000255" key="1">
    <source>
        <dbReference type="HAMAP-Rule" id="MF_00191"/>
    </source>
</evidence>
<feature type="chain" id="PRO_1000118602" description="4-hydroxy-3-methylbut-2-enyl diphosphate reductase">
    <location>
        <begin position="1"/>
        <end position="402"/>
    </location>
</feature>
<feature type="active site" description="Proton donor" evidence="1">
    <location>
        <position position="187"/>
    </location>
</feature>
<feature type="binding site" evidence="1">
    <location>
        <position position="66"/>
    </location>
    <ligand>
        <name>[4Fe-4S] cluster</name>
        <dbReference type="ChEBI" id="CHEBI:49883"/>
    </ligand>
</feature>
<feature type="binding site" evidence="1">
    <location>
        <position position="96"/>
    </location>
    <ligand>
        <name>(2E)-4-hydroxy-3-methylbut-2-enyl diphosphate</name>
        <dbReference type="ChEBI" id="CHEBI:128753"/>
    </ligand>
</feature>
<feature type="binding site" evidence="1">
    <location>
        <position position="96"/>
    </location>
    <ligand>
        <name>dimethylallyl diphosphate</name>
        <dbReference type="ChEBI" id="CHEBI:57623"/>
    </ligand>
</feature>
<feature type="binding site" evidence="1">
    <location>
        <position position="96"/>
    </location>
    <ligand>
        <name>isopentenyl diphosphate</name>
        <dbReference type="ChEBI" id="CHEBI:128769"/>
    </ligand>
</feature>
<feature type="binding site" evidence="1">
    <location>
        <position position="157"/>
    </location>
    <ligand>
        <name>[4Fe-4S] cluster</name>
        <dbReference type="ChEBI" id="CHEBI:49883"/>
    </ligand>
</feature>
<feature type="binding site" evidence="1">
    <location>
        <position position="185"/>
    </location>
    <ligand>
        <name>(2E)-4-hydroxy-3-methylbut-2-enyl diphosphate</name>
        <dbReference type="ChEBI" id="CHEBI:128753"/>
    </ligand>
</feature>
<feature type="binding site" evidence="1">
    <location>
        <position position="185"/>
    </location>
    <ligand>
        <name>dimethylallyl diphosphate</name>
        <dbReference type="ChEBI" id="CHEBI:57623"/>
    </ligand>
</feature>
<feature type="binding site" evidence="1">
    <location>
        <position position="185"/>
    </location>
    <ligand>
        <name>isopentenyl diphosphate</name>
        <dbReference type="ChEBI" id="CHEBI:128769"/>
    </ligand>
</feature>
<feature type="binding site" evidence="1">
    <location>
        <position position="250"/>
    </location>
    <ligand>
        <name>(2E)-4-hydroxy-3-methylbut-2-enyl diphosphate</name>
        <dbReference type="ChEBI" id="CHEBI:128753"/>
    </ligand>
</feature>
<feature type="binding site" evidence="1">
    <location>
        <position position="288"/>
    </location>
    <ligand>
        <name>[4Fe-4S] cluster</name>
        <dbReference type="ChEBI" id="CHEBI:49883"/>
    </ligand>
</feature>
<feature type="binding site" evidence="1">
    <location>
        <position position="317"/>
    </location>
    <ligand>
        <name>(2E)-4-hydroxy-3-methylbut-2-enyl diphosphate</name>
        <dbReference type="ChEBI" id="CHEBI:128753"/>
    </ligand>
</feature>
<feature type="binding site" evidence="1">
    <location>
        <position position="317"/>
    </location>
    <ligand>
        <name>dimethylallyl diphosphate</name>
        <dbReference type="ChEBI" id="CHEBI:57623"/>
    </ligand>
</feature>
<feature type="binding site" evidence="1">
    <location>
        <position position="317"/>
    </location>
    <ligand>
        <name>isopentenyl diphosphate</name>
        <dbReference type="ChEBI" id="CHEBI:128769"/>
    </ligand>
</feature>
<feature type="binding site" evidence="1">
    <location>
        <position position="318"/>
    </location>
    <ligand>
        <name>(2E)-4-hydroxy-3-methylbut-2-enyl diphosphate</name>
        <dbReference type="ChEBI" id="CHEBI:128753"/>
    </ligand>
</feature>
<feature type="binding site" evidence="1">
    <location>
        <position position="318"/>
    </location>
    <ligand>
        <name>dimethylallyl diphosphate</name>
        <dbReference type="ChEBI" id="CHEBI:57623"/>
    </ligand>
</feature>
<feature type="binding site" evidence="1">
    <location>
        <position position="318"/>
    </location>
    <ligand>
        <name>isopentenyl diphosphate</name>
        <dbReference type="ChEBI" id="CHEBI:128769"/>
    </ligand>
</feature>
<feature type="binding site" evidence="1">
    <location>
        <position position="319"/>
    </location>
    <ligand>
        <name>(2E)-4-hydroxy-3-methylbut-2-enyl diphosphate</name>
        <dbReference type="ChEBI" id="CHEBI:128753"/>
    </ligand>
</feature>
<feature type="binding site" evidence="1">
    <location>
        <position position="319"/>
    </location>
    <ligand>
        <name>dimethylallyl diphosphate</name>
        <dbReference type="ChEBI" id="CHEBI:57623"/>
    </ligand>
</feature>
<feature type="binding site" evidence="1">
    <location>
        <position position="319"/>
    </location>
    <ligand>
        <name>isopentenyl diphosphate</name>
        <dbReference type="ChEBI" id="CHEBI:128769"/>
    </ligand>
</feature>
<feature type="binding site" evidence="1">
    <location>
        <position position="379"/>
    </location>
    <ligand>
        <name>(2E)-4-hydroxy-3-methylbut-2-enyl diphosphate</name>
        <dbReference type="ChEBI" id="CHEBI:128753"/>
    </ligand>
</feature>
<feature type="binding site" evidence="1">
    <location>
        <position position="379"/>
    </location>
    <ligand>
        <name>dimethylallyl diphosphate</name>
        <dbReference type="ChEBI" id="CHEBI:57623"/>
    </ligand>
</feature>
<feature type="binding site" evidence="1">
    <location>
        <position position="379"/>
    </location>
    <ligand>
        <name>isopentenyl diphosphate</name>
        <dbReference type="ChEBI" id="CHEBI:128769"/>
    </ligand>
</feature>
<organism>
    <name type="scientific">Gloeothece citriformis (strain PCC 7424)</name>
    <name type="common">Cyanothece sp. (strain PCC 7424)</name>
    <dbReference type="NCBI Taxonomy" id="65393"/>
    <lineage>
        <taxon>Bacteria</taxon>
        <taxon>Bacillati</taxon>
        <taxon>Cyanobacteriota</taxon>
        <taxon>Cyanophyceae</taxon>
        <taxon>Oscillatoriophycideae</taxon>
        <taxon>Chroococcales</taxon>
        <taxon>Aphanothecaceae</taxon>
        <taxon>Gloeothece</taxon>
        <taxon>Gloeothece citriformis</taxon>
    </lineage>
</organism>
<dbReference type="EC" id="1.17.7.4" evidence="1"/>
<dbReference type="EMBL" id="CP001291">
    <property type="protein sequence ID" value="ACK73281.1"/>
    <property type="molecule type" value="Genomic_DNA"/>
</dbReference>
<dbReference type="RefSeq" id="WP_015956862.1">
    <property type="nucleotide sequence ID" value="NC_011729.1"/>
</dbReference>
<dbReference type="SMR" id="B7KEG3"/>
<dbReference type="STRING" id="65393.PCC7424_4926"/>
<dbReference type="KEGG" id="cyc:PCC7424_4926"/>
<dbReference type="eggNOG" id="COG0761">
    <property type="taxonomic scope" value="Bacteria"/>
</dbReference>
<dbReference type="HOGENOM" id="CLU_027486_4_0_3"/>
<dbReference type="OrthoDB" id="9804077at2"/>
<dbReference type="UniPathway" id="UPA00056">
    <property type="reaction ID" value="UER00097"/>
</dbReference>
<dbReference type="UniPathway" id="UPA00059">
    <property type="reaction ID" value="UER00105"/>
</dbReference>
<dbReference type="Proteomes" id="UP000002384">
    <property type="component" value="Chromosome"/>
</dbReference>
<dbReference type="GO" id="GO:0051539">
    <property type="term" value="F:4 iron, 4 sulfur cluster binding"/>
    <property type="evidence" value="ECO:0007669"/>
    <property type="project" value="UniProtKB-UniRule"/>
</dbReference>
<dbReference type="GO" id="GO:0051745">
    <property type="term" value="F:4-hydroxy-3-methylbut-2-enyl diphosphate reductase activity"/>
    <property type="evidence" value="ECO:0007669"/>
    <property type="project" value="UniProtKB-UniRule"/>
</dbReference>
<dbReference type="GO" id="GO:0046872">
    <property type="term" value="F:metal ion binding"/>
    <property type="evidence" value="ECO:0007669"/>
    <property type="project" value="UniProtKB-KW"/>
</dbReference>
<dbReference type="GO" id="GO:0050992">
    <property type="term" value="P:dimethylallyl diphosphate biosynthetic process"/>
    <property type="evidence" value="ECO:0007669"/>
    <property type="project" value="UniProtKB-UniRule"/>
</dbReference>
<dbReference type="GO" id="GO:0019288">
    <property type="term" value="P:isopentenyl diphosphate biosynthetic process, methylerythritol 4-phosphate pathway"/>
    <property type="evidence" value="ECO:0007669"/>
    <property type="project" value="UniProtKB-UniRule"/>
</dbReference>
<dbReference type="GO" id="GO:0016114">
    <property type="term" value="P:terpenoid biosynthetic process"/>
    <property type="evidence" value="ECO:0007669"/>
    <property type="project" value="UniProtKB-UniRule"/>
</dbReference>
<dbReference type="CDD" id="cd13944">
    <property type="entry name" value="lytB_ispH"/>
    <property type="match status" value="1"/>
</dbReference>
<dbReference type="Gene3D" id="3.40.50.11270">
    <property type="match status" value="1"/>
</dbReference>
<dbReference type="Gene3D" id="3.40.1010.20">
    <property type="entry name" value="4-hydroxy-3-methylbut-2-enyl diphosphate reductase, catalytic domain"/>
    <property type="match status" value="2"/>
</dbReference>
<dbReference type="HAMAP" id="MF_00191">
    <property type="entry name" value="IspH"/>
    <property type="match status" value="1"/>
</dbReference>
<dbReference type="InterPro" id="IPR003451">
    <property type="entry name" value="LytB/IspH"/>
</dbReference>
<dbReference type="NCBIfam" id="TIGR00216">
    <property type="entry name" value="ispH_lytB"/>
    <property type="match status" value="1"/>
</dbReference>
<dbReference type="NCBIfam" id="NF009911">
    <property type="entry name" value="PRK13371.1"/>
    <property type="match status" value="1"/>
</dbReference>
<dbReference type="PANTHER" id="PTHR31619">
    <property type="entry name" value="4-HYDROXY-3-METHYLBUT-2-ENYL DIPHOSPHATE REDUCTASE, CHLOROPLASTIC"/>
    <property type="match status" value="1"/>
</dbReference>
<dbReference type="PANTHER" id="PTHR31619:SF5">
    <property type="entry name" value="4-HYDROXY-3-METHYLBUT-2-ENYL DIPHOSPHATE REDUCTASE, CHLOROPLASTIC"/>
    <property type="match status" value="1"/>
</dbReference>
<dbReference type="Pfam" id="PF02401">
    <property type="entry name" value="LYTB"/>
    <property type="match status" value="1"/>
</dbReference>
<comment type="function">
    <text evidence="1">Catalyzes the conversion of 1-hydroxy-2-methyl-2-(E)-butenyl 4-diphosphate (HMBPP) into a mixture of isopentenyl diphosphate (IPP) and dimethylallyl diphosphate (DMAPP). Acts in the terminal step of the DOXP/MEP pathway for isoprenoid precursor biosynthesis.</text>
</comment>
<comment type="catalytic activity">
    <reaction evidence="1">
        <text>isopentenyl diphosphate + 2 oxidized [2Fe-2S]-[ferredoxin] + H2O = (2E)-4-hydroxy-3-methylbut-2-enyl diphosphate + 2 reduced [2Fe-2S]-[ferredoxin] + 2 H(+)</text>
        <dbReference type="Rhea" id="RHEA:24488"/>
        <dbReference type="Rhea" id="RHEA-COMP:10000"/>
        <dbReference type="Rhea" id="RHEA-COMP:10001"/>
        <dbReference type="ChEBI" id="CHEBI:15377"/>
        <dbReference type="ChEBI" id="CHEBI:15378"/>
        <dbReference type="ChEBI" id="CHEBI:33737"/>
        <dbReference type="ChEBI" id="CHEBI:33738"/>
        <dbReference type="ChEBI" id="CHEBI:128753"/>
        <dbReference type="ChEBI" id="CHEBI:128769"/>
        <dbReference type="EC" id="1.17.7.4"/>
    </reaction>
</comment>
<comment type="catalytic activity">
    <reaction evidence="1">
        <text>dimethylallyl diphosphate + 2 oxidized [2Fe-2S]-[ferredoxin] + H2O = (2E)-4-hydroxy-3-methylbut-2-enyl diphosphate + 2 reduced [2Fe-2S]-[ferredoxin] + 2 H(+)</text>
        <dbReference type="Rhea" id="RHEA:24825"/>
        <dbReference type="Rhea" id="RHEA-COMP:10000"/>
        <dbReference type="Rhea" id="RHEA-COMP:10001"/>
        <dbReference type="ChEBI" id="CHEBI:15377"/>
        <dbReference type="ChEBI" id="CHEBI:15378"/>
        <dbReference type="ChEBI" id="CHEBI:33737"/>
        <dbReference type="ChEBI" id="CHEBI:33738"/>
        <dbReference type="ChEBI" id="CHEBI:57623"/>
        <dbReference type="ChEBI" id="CHEBI:128753"/>
        <dbReference type="EC" id="1.17.7.4"/>
    </reaction>
</comment>
<comment type="cofactor">
    <cofactor evidence="1">
        <name>[4Fe-4S] cluster</name>
        <dbReference type="ChEBI" id="CHEBI:49883"/>
    </cofactor>
    <text evidence="1">Binds 1 [4Fe-4S] cluster per subunit.</text>
</comment>
<comment type="pathway">
    <text evidence="1">Isoprenoid biosynthesis; dimethylallyl diphosphate biosynthesis; dimethylallyl diphosphate from (2E)-4-hydroxy-3-methylbutenyl diphosphate: step 1/1.</text>
</comment>
<comment type="pathway">
    <text evidence="1">Isoprenoid biosynthesis; isopentenyl diphosphate biosynthesis via DXP pathway; isopentenyl diphosphate from 1-deoxy-D-xylulose 5-phosphate: step 6/6.</text>
</comment>
<comment type="similarity">
    <text evidence="1">Belongs to the IspH family.</text>
</comment>
<gene>
    <name evidence="1" type="primary">ispH</name>
    <name type="ordered locus">PCC7424_4926</name>
</gene>